<feature type="chain" id="PRO_1000090572" description="Crossover junction endodeoxyribonuclease RuvC">
    <location>
        <begin position="1"/>
        <end position="173"/>
    </location>
</feature>
<feature type="active site" evidence="1">
    <location>
        <position position="8"/>
    </location>
</feature>
<feature type="active site" evidence="1">
    <location>
        <position position="67"/>
    </location>
</feature>
<feature type="active site" evidence="1">
    <location>
        <position position="139"/>
    </location>
</feature>
<feature type="binding site" evidence="1">
    <location>
        <position position="8"/>
    </location>
    <ligand>
        <name>Mg(2+)</name>
        <dbReference type="ChEBI" id="CHEBI:18420"/>
        <label>1</label>
    </ligand>
</feature>
<feature type="binding site" evidence="1">
    <location>
        <position position="67"/>
    </location>
    <ligand>
        <name>Mg(2+)</name>
        <dbReference type="ChEBI" id="CHEBI:18420"/>
        <label>2</label>
    </ligand>
</feature>
<feature type="binding site" evidence="1">
    <location>
        <position position="139"/>
    </location>
    <ligand>
        <name>Mg(2+)</name>
        <dbReference type="ChEBI" id="CHEBI:18420"/>
        <label>1</label>
    </ligand>
</feature>
<dbReference type="EC" id="3.1.21.10" evidence="1"/>
<dbReference type="EMBL" id="CP001139">
    <property type="protein sequence ID" value="ACH67047.1"/>
    <property type="molecule type" value="Genomic_DNA"/>
</dbReference>
<dbReference type="RefSeq" id="WP_005418602.1">
    <property type="nucleotide sequence ID" value="NC_011184.1"/>
</dbReference>
<dbReference type="SMR" id="B5FCQ0"/>
<dbReference type="GeneID" id="54163620"/>
<dbReference type="KEGG" id="vfm:VFMJ11_0991"/>
<dbReference type="HOGENOM" id="CLU_091257_2_1_6"/>
<dbReference type="Proteomes" id="UP000001857">
    <property type="component" value="Chromosome I"/>
</dbReference>
<dbReference type="GO" id="GO:0005737">
    <property type="term" value="C:cytoplasm"/>
    <property type="evidence" value="ECO:0007669"/>
    <property type="project" value="UniProtKB-SubCell"/>
</dbReference>
<dbReference type="GO" id="GO:0048476">
    <property type="term" value="C:Holliday junction resolvase complex"/>
    <property type="evidence" value="ECO:0007669"/>
    <property type="project" value="UniProtKB-UniRule"/>
</dbReference>
<dbReference type="GO" id="GO:0008821">
    <property type="term" value="F:crossover junction DNA endonuclease activity"/>
    <property type="evidence" value="ECO:0007669"/>
    <property type="project" value="UniProtKB-UniRule"/>
</dbReference>
<dbReference type="GO" id="GO:0003677">
    <property type="term" value="F:DNA binding"/>
    <property type="evidence" value="ECO:0007669"/>
    <property type="project" value="UniProtKB-KW"/>
</dbReference>
<dbReference type="GO" id="GO:0000287">
    <property type="term" value="F:magnesium ion binding"/>
    <property type="evidence" value="ECO:0007669"/>
    <property type="project" value="UniProtKB-UniRule"/>
</dbReference>
<dbReference type="GO" id="GO:0006310">
    <property type="term" value="P:DNA recombination"/>
    <property type="evidence" value="ECO:0007669"/>
    <property type="project" value="UniProtKB-UniRule"/>
</dbReference>
<dbReference type="GO" id="GO:0006281">
    <property type="term" value="P:DNA repair"/>
    <property type="evidence" value="ECO:0007669"/>
    <property type="project" value="UniProtKB-UniRule"/>
</dbReference>
<dbReference type="CDD" id="cd16962">
    <property type="entry name" value="RuvC"/>
    <property type="match status" value="1"/>
</dbReference>
<dbReference type="FunFam" id="3.30.420.10:FF:000002">
    <property type="entry name" value="Crossover junction endodeoxyribonuclease RuvC"/>
    <property type="match status" value="1"/>
</dbReference>
<dbReference type="Gene3D" id="3.30.420.10">
    <property type="entry name" value="Ribonuclease H-like superfamily/Ribonuclease H"/>
    <property type="match status" value="1"/>
</dbReference>
<dbReference type="HAMAP" id="MF_00034">
    <property type="entry name" value="RuvC"/>
    <property type="match status" value="1"/>
</dbReference>
<dbReference type="InterPro" id="IPR012337">
    <property type="entry name" value="RNaseH-like_sf"/>
</dbReference>
<dbReference type="InterPro" id="IPR036397">
    <property type="entry name" value="RNaseH_sf"/>
</dbReference>
<dbReference type="InterPro" id="IPR020563">
    <property type="entry name" value="X-over_junc_endoDNase_Mg_BS"/>
</dbReference>
<dbReference type="InterPro" id="IPR002176">
    <property type="entry name" value="X-over_junc_endoDNase_RuvC"/>
</dbReference>
<dbReference type="NCBIfam" id="TIGR00228">
    <property type="entry name" value="ruvC"/>
    <property type="match status" value="1"/>
</dbReference>
<dbReference type="PANTHER" id="PTHR30194">
    <property type="entry name" value="CROSSOVER JUNCTION ENDODEOXYRIBONUCLEASE RUVC"/>
    <property type="match status" value="1"/>
</dbReference>
<dbReference type="PANTHER" id="PTHR30194:SF3">
    <property type="entry name" value="CROSSOVER JUNCTION ENDODEOXYRIBONUCLEASE RUVC"/>
    <property type="match status" value="1"/>
</dbReference>
<dbReference type="Pfam" id="PF02075">
    <property type="entry name" value="RuvC"/>
    <property type="match status" value="1"/>
</dbReference>
<dbReference type="PRINTS" id="PR00696">
    <property type="entry name" value="RSOLVASERUVC"/>
</dbReference>
<dbReference type="SUPFAM" id="SSF53098">
    <property type="entry name" value="Ribonuclease H-like"/>
    <property type="match status" value="1"/>
</dbReference>
<dbReference type="PROSITE" id="PS01321">
    <property type="entry name" value="RUVC"/>
    <property type="match status" value="1"/>
</dbReference>
<proteinExistence type="inferred from homology"/>
<keyword id="KW-0963">Cytoplasm</keyword>
<keyword id="KW-0227">DNA damage</keyword>
<keyword id="KW-0233">DNA recombination</keyword>
<keyword id="KW-0234">DNA repair</keyword>
<keyword id="KW-0238">DNA-binding</keyword>
<keyword id="KW-0255">Endonuclease</keyword>
<keyword id="KW-0378">Hydrolase</keyword>
<keyword id="KW-0460">Magnesium</keyword>
<keyword id="KW-0479">Metal-binding</keyword>
<keyword id="KW-0540">Nuclease</keyword>
<name>RUVC_ALIFM</name>
<protein>
    <recommendedName>
        <fullName evidence="1">Crossover junction endodeoxyribonuclease RuvC</fullName>
        <ecNumber evidence="1">3.1.21.10</ecNumber>
    </recommendedName>
    <alternativeName>
        <fullName evidence="1">Holliday junction nuclease RuvC</fullName>
    </alternativeName>
    <alternativeName>
        <fullName evidence="1">Holliday junction resolvase RuvC</fullName>
    </alternativeName>
</protein>
<gene>
    <name evidence="1" type="primary">ruvC</name>
    <name type="ordered locus">VFMJ11_0991</name>
</gene>
<evidence type="ECO:0000255" key="1">
    <source>
        <dbReference type="HAMAP-Rule" id="MF_00034"/>
    </source>
</evidence>
<comment type="function">
    <text evidence="1">The RuvA-RuvB-RuvC complex processes Holliday junction (HJ) DNA during genetic recombination and DNA repair. Endonuclease that resolves HJ intermediates. Cleaves cruciform DNA by making single-stranded nicks across the HJ at symmetrical positions within the homologous arms, yielding a 5'-phosphate and a 3'-hydroxyl group; requires a central core of homology in the junction. The consensus cleavage sequence is 5'-(A/T)TT(C/G)-3'. Cleavage occurs on the 3'-side of the TT dinucleotide at the point of strand exchange. HJ branch migration catalyzed by RuvA-RuvB allows RuvC to scan DNA until it finds its consensus sequence, where it cleaves and resolves the cruciform DNA.</text>
</comment>
<comment type="catalytic activity">
    <reaction evidence="1">
        <text>Endonucleolytic cleavage at a junction such as a reciprocal single-stranded crossover between two homologous DNA duplexes (Holliday junction).</text>
        <dbReference type="EC" id="3.1.21.10"/>
    </reaction>
</comment>
<comment type="cofactor">
    <cofactor evidence="1">
        <name>Mg(2+)</name>
        <dbReference type="ChEBI" id="CHEBI:18420"/>
    </cofactor>
    <text evidence="1">Binds 2 Mg(2+) ion per subunit.</text>
</comment>
<comment type="subunit">
    <text evidence="1">Homodimer which binds Holliday junction (HJ) DNA. The HJ becomes 2-fold symmetrical on binding to RuvC with unstacked arms; it has a different conformation from HJ DNA in complex with RuvA. In the full resolvosome a probable DNA-RuvA(4)-RuvB(12)-RuvC(2) complex forms which resolves the HJ.</text>
</comment>
<comment type="subcellular location">
    <subcellularLocation>
        <location evidence="1">Cytoplasm</location>
    </subcellularLocation>
</comment>
<comment type="similarity">
    <text evidence="1">Belongs to the RuvC family.</text>
</comment>
<accession>B5FCQ0</accession>
<sequence>MSIILGIDPGSRITGYGVIRQNGRHLQYLGSGCIRMSEKELPGRLKQIYAGVSEIITQFQPDVFAIEQVFMSKNADSALKLGQARGSAIVAAVNADLPVYEYAARLIKQAVTGTGGADKSQVQHMVMSMLKLPAKPQADAADALGAAICHANTNKTLIALAGKATGARRGRYR</sequence>
<organism>
    <name type="scientific">Aliivibrio fischeri (strain MJ11)</name>
    <name type="common">Vibrio fischeri</name>
    <dbReference type="NCBI Taxonomy" id="388396"/>
    <lineage>
        <taxon>Bacteria</taxon>
        <taxon>Pseudomonadati</taxon>
        <taxon>Pseudomonadota</taxon>
        <taxon>Gammaproteobacteria</taxon>
        <taxon>Vibrionales</taxon>
        <taxon>Vibrionaceae</taxon>
        <taxon>Aliivibrio</taxon>
    </lineage>
</organism>
<reference key="1">
    <citation type="submission" date="2008-08" db="EMBL/GenBank/DDBJ databases">
        <title>Complete sequence of Vibrio fischeri strain MJ11.</title>
        <authorList>
            <person name="Mandel M.J."/>
            <person name="Stabb E.V."/>
            <person name="Ruby E.G."/>
            <person name="Ferriera S."/>
            <person name="Johnson J."/>
            <person name="Kravitz S."/>
            <person name="Beeson K."/>
            <person name="Sutton G."/>
            <person name="Rogers Y.-H."/>
            <person name="Friedman R."/>
            <person name="Frazier M."/>
            <person name="Venter J.C."/>
        </authorList>
    </citation>
    <scope>NUCLEOTIDE SEQUENCE [LARGE SCALE GENOMIC DNA]</scope>
    <source>
        <strain>MJ11</strain>
    </source>
</reference>